<sequence>MKKQPIVALESTVIAHGLPWPTNFETAVSMENKVKEKGAIPKTLGIINGEIKIGLTEKEIEHLAKAKNVMKIGTAEIAAAIALRRNAATTVSATMRLAKNAGIDVFATGGIGGVHRNVPWDVSQDIMELSKTRMIVVCAGFKSILDVERTIEFLETFQVTVVGYQTDYMPLFHTKESEYKVNIRADSPEEIVAIFNEKEKLGIEGAILVANPIPEQSEIPREELEEYIKKAVAQAKENGISGKSLTPFLLSRLTELSGGKTLTANIALLKNNASLAGEIAVALSRGGRD</sequence>
<name>PSUG_KOSOT</name>
<dbReference type="EC" id="4.2.1.70" evidence="1"/>
<dbReference type="EMBL" id="CP001634">
    <property type="protein sequence ID" value="ACR80093.1"/>
    <property type="molecule type" value="Genomic_DNA"/>
</dbReference>
<dbReference type="RefSeq" id="WP_015868740.1">
    <property type="nucleotide sequence ID" value="NC_012785.1"/>
</dbReference>
<dbReference type="SMR" id="C5CDZ1"/>
<dbReference type="STRING" id="521045.Kole_1400"/>
<dbReference type="KEGG" id="kol:Kole_1400"/>
<dbReference type="eggNOG" id="COG2313">
    <property type="taxonomic scope" value="Bacteria"/>
</dbReference>
<dbReference type="HOGENOM" id="CLU_012201_0_1_0"/>
<dbReference type="OrthoDB" id="9805870at2"/>
<dbReference type="Proteomes" id="UP000002382">
    <property type="component" value="Chromosome"/>
</dbReference>
<dbReference type="GO" id="GO:0005737">
    <property type="term" value="C:cytoplasm"/>
    <property type="evidence" value="ECO:0007669"/>
    <property type="project" value="TreeGrafter"/>
</dbReference>
<dbReference type="GO" id="GO:0016798">
    <property type="term" value="F:hydrolase activity, acting on glycosyl bonds"/>
    <property type="evidence" value="ECO:0007669"/>
    <property type="project" value="UniProtKB-KW"/>
</dbReference>
<dbReference type="GO" id="GO:0046872">
    <property type="term" value="F:metal ion binding"/>
    <property type="evidence" value="ECO:0007669"/>
    <property type="project" value="UniProtKB-KW"/>
</dbReference>
<dbReference type="GO" id="GO:0004730">
    <property type="term" value="F:pseudouridylate synthase activity"/>
    <property type="evidence" value="ECO:0007669"/>
    <property type="project" value="UniProtKB-UniRule"/>
</dbReference>
<dbReference type="GO" id="GO:0046113">
    <property type="term" value="P:nucleobase catabolic process"/>
    <property type="evidence" value="ECO:0007669"/>
    <property type="project" value="UniProtKB-UniRule"/>
</dbReference>
<dbReference type="Gene3D" id="3.40.1790.10">
    <property type="entry name" value="Indigoidine synthase domain"/>
    <property type="match status" value="1"/>
</dbReference>
<dbReference type="HAMAP" id="MF_01876">
    <property type="entry name" value="PsiMP_glycosidase"/>
    <property type="match status" value="1"/>
</dbReference>
<dbReference type="InterPro" id="IPR022830">
    <property type="entry name" value="Indigdn_synthA-like"/>
</dbReference>
<dbReference type="InterPro" id="IPR007342">
    <property type="entry name" value="PsuG"/>
</dbReference>
<dbReference type="PANTHER" id="PTHR42909:SF1">
    <property type="entry name" value="CARBOHYDRATE KINASE PFKB DOMAIN-CONTAINING PROTEIN"/>
    <property type="match status" value="1"/>
</dbReference>
<dbReference type="PANTHER" id="PTHR42909">
    <property type="entry name" value="ZGC:136858"/>
    <property type="match status" value="1"/>
</dbReference>
<dbReference type="Pfam" id="PF04227">
    <property type="entry name" value="Indigoidine_A"/>
    <property type="match status" value="1"/>
</dbReference>
<dbReference type="SUPFAM" id="SSF110581">
    <property type="entry name" value="Indigoidine synthase A-like"/>
    <property type="match status" value="1"/>
</dbReference>
<protein>
    <recommendedName>
        <fullName evidence="1">Pseudouridine-5'-phosphate glycosidase</fullName>
        <shortName evidence="1">PsiMP glycosidase</shortName>
        <ecNumber evidence="1">4.2.1.70</ecNumber>
    </recommendedName>
</protein>
<reference key="1">
    <citation type="submission" date="2009-06" db="EMBL/GenBank/DDBJ databases">
        <title>Complete sequence of Thermotogales bacterium TBF 19.5.1.</title>
        <authorList>
            <consortium name="US DOE Joint Genome Institute"/>
            <person name="Lucas S."/>
            <person name="Copeland A."/>
            <person name="Lapidus A."/>
            <person name="Glavina del Rio T."/>
            <person name="Tice H."/>
            <person name="Bruce D."/>
            <person name="Goodwin L."/>
            <person name="Pitluck S."/>
            <person name="Chertkov O."/>
            <person name="Brettin T."/>
            <person name="Detter J.C."/>
            <person name="Han C."/>
            <person name="Schmutz J."/>
            <person name="Larimer F."/>
            <person name="Land M."/>
            <person name="Hauser L."/>
            <person name="Kyrpides N."/>
            <person name="Ovchinnikova G."/>
            <person name="Noll K."/>
        </authorList>
    </citation>
    <scope>NUCLEOTIDE SEQUENCE [LARGE SCALE GENOMIC DNA]</scope>
    <source>
        <strain>ATCC BAA-1733 / DSM 21960 / TBF 19.5.1</strain>
    </source>
</reference>
<keyword id="KW-0326">Glycosidase</keyword>
<keyword id="KW-0378">Hydrolase</keyword>
<keyword id="KW-0456">Lyase</keyword>
<keyword id="KW-0464">Manganese</keyword>
<keyword id="KW-0479">Metal-binding</keyword>
<keyword id="KW-1185">Reference proteome</keyword>
<comment type="function">
    <text evidence="1">Catalyzes the reversible cleavage of pseudouridine 5'-phosphate (PsiMP) to ribose 5-phosphate and uracil. Functions biologically in the cleavage direction, as part of a pseudouridine degradation pathway.</text>
</comment>
<comment type="catalytic activity">
    <reaction evidence="1">
        <text>D-ribose 5-phosphate + uracil = psi-UMP + H2O</text>
        <dbReference type="Rhea" id="RHEA:18337"/>
        <dbReference type="ChEBI" id="CHEBI:15377"/>
        <dbReference type="ChEBI" id="CHEBI:17568"/>
        <dbReference type="ChEBI" id="CHEBI:58380"/>
        <dbReference type="ChEBI" id="CHEBI:78346"/>
        <dbReference type="EC" id="4.2.1.70"/>
    </reaction>
</comment>
<comment type="cofactor">
    <cofactor evidence="1">
        <name>Mn(2+)</name>
        <dbReference type="ChEBI" id="CHEBI:29035"/>
    </cofactor>
    <text evidence="1">Binds 1 Mn(2+) ion per subunit.</text>
</comment>
<comment type="subunit">
    <text evidence="1">Homotrimer.</text>
</comment>
<comment type="similarity">
    <text evidence="1">Belongs to the pseudouridine-5'-phosphate glycosidase family.</text>
</comment>
<evidence type="ECO:0000255" key="1">
    <source>
        <dbReference type="HAMAP-Rule" id="MF_01876"/>
    </source>
</evidence>
<accession>C5CDZ1</accession>
<organism>
    <name type="scientific">Kosmotoga olearia (strain ATCC BAA-1733 / DSM 21960 / TBF 19.5.1)</name>
    <dbReference type="NCBI Taxonomy" id="521045"/>
    <lineage>
        <taxon>Bacteria</taxon>
        <taxon>Thermotogati</taxon>
        <taxon>Thermotogota</taxon>
        <taxon>Thermotogae</taxon>
        <taxon>Kosmotogales</taxon>
        <taxon>Kosmotogaceae</taxon>
        <taxon>Kosmotoga</taxon>
    </lineage>
</organism>
<proteinExistence type="inferred from homology"/>
<gene>
    <name evidence="1" type="primary">psuG</name>
    <name type="ordered locus">Kole_1400</name>
</gene>
<feature type="chain" id="PRO_0000390526" description="Pseudouridine-5'-phosphate glycosidase">
    <location>
        <begin position="1"/>
        <end position="289"/>
    </location>
</feature>
<feature type="active site" description="Proton donor" evidence="1">
    <location>
        <position position="10"/>
    </location>
</feature>
<feature type="active site" description="Nucleophile" evidence="1">
    <location>
        <position position="142"/>
    </location>
</feature>
<feature type="binding site" evidence="1">
    <location>
        <position position="71"/>
    </location>
    <ligand>
        <name>substrate</name>
    </ligand>
</feature>
<feature type="binding site" evidence="1">
    <location>
        <position position="91"/>
    </location>
    <ligand>
        <name>substrate</name>
    </ligand>
</feature>
<feature type="binding site" evidence="1">
    <location>
        <position position="121"/>
    </location>
    <ligand>
        <name>Mn(2+)</name>
        <dbReference type="ChEBI" id="CHEBI:29035"/>
    </ligand>
</feature>
<feature type="binding site" evidence="1">
    <location>
        <begin position="123"/>
        <end position="125"/>
    </location>
    <ligand>
        <name>substrate</name>
    </ligand>
</feature>